<protein>
    <recommendedName>
        <fullName>ABC transporter B family member 13</fullName>
        <shortName>ABC transporter ABCB.13</shortName>
        <shortName>AtABCB13</shortName>
    </recommendedName>
    <alternativeName>
        <fullName>P-glycoprotein 13</fullName>
    </alternativeName>
    <alternativeName>
        <fullName>Putative multidrug resistance protein 15</fullName>
    </alternativeName>
</protein>
<comment type="subcellular location">
    <subcellularLocation>
        <location evidence="3">Membrane</location>
        <topology evidence="3">Multi-pass membrane protein</topology>
    </subcellularLocation>
</comment>
<comment type="similarity">
    <text evidence="5">Belongs to the ABC transporter superfamily. ABCB family. Multidrug resistance exporter (TC 3.A.1.201) subfamily.</text>
</comment>
<dbReference type="EMBL" id="AC069471">
    <property type="protein sequence ID" value="AAG51482.1"/>
    <property type="molecule type" value="Genomic_DNA"/>
</dbReference>
<dbReference type="EMBL" id="CP002684">
    <property type="protein sequence ID" value="AEE30893.1"/>
    <property type="molecule type" value="Genomic_DNA"/>
</dbReference>
<dbReference type="PIR" id="G86404">
    <property type="entry name" value="G86404"/>
</dbReference>
<dbReference type="RefSeq" id="NP_174115.1">
    <property type="nucleotide sequence ID" value="NM_102559.2"/>
</dbReference>
<dbReference type="SMR" id="Q9C7F8"/>
<dbReference type="BioGRID" id="24922">
    <property type="interactions" value="2"/>
</dbReference>
<dbReference type="FunCoup" id="Q9C7F8">
    <property type="interactions" value="196"/>
</dbReference>
<dbReference type="STRING" id="3702.Q9C7F8"/>
<dbReference type="GlyCosmos" id="Q9C7F8">
    <property type="glycosylation" value="6 sites, No reported glycans"/>
</dbReference>
<dbReference type="GlyGen" id="Q9C7F8">
    <property type="glycosylation" value="6 sites"/>
</dbReference>
<dbReference type="iPTMnet" id="Q9C7F8"/>
<dbReference type="PaxDb" id="3702-AT1G27940.1"/>
<dbReference type="ProteomicsDB" id="245143"/>
<dbReference type="EnsemblPlants" id="AT1G27940.1">
    <property type="protein sequence ID" value="AT1G27940.1"/>
    <property type="gene ID" value="AT1G27940"/>
</dbReference>
<dbReference type="GeneID" id="839687"/>
<dbReference type="Gramene" id="AT1G27940.1">
    <property type="protein sequence ID" value="AT1G27940.1"/>
    <property type="gene ID" value="AT1G27940"/>
</dbReference>
<dbReference type="KEGG" id="ath:AT1G27940"/>
<dbReference type="Araport" id="AT1G27940"/>
<dbReference type="TAIR" id="AT1G27940">
    <property type="gene designation" value="ABCB13"/>
</dbReference>
<dbReference type="eggNOG" id="KOG0055">
    <property type="taxonomic scope" value="Eukaryota"/>
</dbReference>
<dbReference type="HOGENOM" id="CLU_000604_17_2_1"/>
<dbReference type="InParanoid" id="Q9C7F8"/>
<dbReference type="OMA" id="PGSIYKQ"/>
<dbReference type="PhylomeDB" id="Q9C7F8"/>
<dbReference type="BioCyc" id="ARA:AT1G27940-MONOMER"/>
<dbReference type="PRO" id="PR:Q9C7F8"/>
<dbReference type="Proteomes" id="UP000006548">
    <property type="component" value="Chromosome 1"/>
</dbReference>
<dbReference type="ExpressionAtlas" id="Q9C7F8">
    <property type="expression patterns" value="baseline and differential"/>
</dbReference>
<dbReference type="GO" id="GO:0016020">
    <property type="term" value="C:membrane"/>
    <property type="evidence" value="ECO:0007669"/>
    <property type="project" value="UniProtKB-SubCell"/>
</dbReference>
<dbReference type="GO" id="GO:0140359">
    <property type="term" value="F:ABC-type transporter activity"/>
    <property type="evidence" value="ECO:0007669"/>
    <property type="project" value="InterPro"/>
</dbReference>
<dbReference type="GO" id="GO:0005524">
    <property type="term" value="F:ATP binding"/>
    <property type="evidence" value="ECO:0007669"/>
    <property type="project" value="UniProtKB-KW"/>
</dbReference>
<dbReference type="GO" id="GO:0016887">
    <property type="term" value="F:ATP hydrolysis activity"/>
    <property type="evidence" value="ECO:0007669"/>
    <property type="project" value="InterPro"/>
</dbReference>
<dbReference type="CDD" id="cd18577">
    <property type="entry name" value="ABC_6TM_Pgp_ABCB1_D1_like"/>
    <property type="match status" value="1"/>
</dbReference>
<dbReference type="CDD" id="cd18578">
    <property type="entry name" value="ABC_6TM_Pgp_ABCB1_D2_like"/>
    <property type="match status" value="1"/>
</dbReference>
<dbReference type="CDD" id="cd03249">
    <property type="entry name" value="ABC_MTABC3_MDL1_MDL2"/>
    <property type="match status" value="2"/>
</dbReference>
<dbReference type="FunFam" id="1.20.1560.10:FF:000009">
    <property type="entry name" value="ABC transporter B family member 1"/>
    <property type="match status" value="1"/>
</dbReference>
<dbReference type="FunFam" id="1.20.1560.10:FF:000029">
    <property type="entry name" value="ABC transporter B family member 1"/>
    <property type="match status" value="1"/>
</dbReference>
<dbReference type="FunFam" id="3.40.50.300:FF:000205">
    <property type="entry name" value="ABC transporter B family member 4"/>
    <property type="match status" value="2"/>
</dbReference>
<dbReference type="Gene3D" id="1.20.1560.10">
    <property type="entry name" value="ABC transporter type 1, transmembrane domain"/>
    <property type="match status" value="3"/>
</dbReference>
<dbReference type="Gene3D" id="3.40.50.300">
    <property type="entry name" value="P-loop containing nucleotide triphosphate hydrolases"/>
    <property type="match status" value="2"/>
</dbReference>
<dbReference type="InterPro" id="IPR003593">
    <property type="entry name" value="AAA+_ATPase"/>
</dbReference>
<dbReference type="InterPro" id="IPR011527">
    <property type="entry name" value="ABC1_TM_dom"/>
</dbReference>
<dbReference type="InterPro" id="IPR036640">
    <property type="entry name" value="ABC1_TM_sf"/>
</dbReference>
<dbReference type="InterPro" id="IPR003439">
    <property type="entry name" value="ABC_transporter-like_ATP-bd"/>
</dbReference>
<dbReference type="InterPro" id="IPR017871">
    <property type="entry name" value="ABC_transporter-like_CS"/>
</dbReference>
<dbReference type="InterPro" id="IPR027417">
    <property type="entry name" value="P-loop_NTPase"/>
</dbReference>
<dbReference type="InterPro" id="IPR039421">
    <property type="entry name" value="Type_1_exporter"/>
</dbReference>
<dbReference type="PANTHER" id="PTHR43394:SF11">
    <property type="entry name" value="ATP-BINDING CASSETTE TRANSPORTER"/>
    <property type="match status" value="1"/>
</dbReference>
<dbReference type="PANTHER" id="PTHR43394">
    <property type="entry name" value="ATP-DEPENDENT PERMEASE MDL1, MITOCHONDRIAL"/>
    <property type="match status" value="1"/>
</dbReference>
<dbReference type="Pfam" id="PF00664">
    <property type="entry name" value="ABC_membrane"/>
    <property type="match status" value="2"/>
</dbReference>
<dbReference type="Pfam" id="PF00005">
    <property type="entry name" value="ABC_tran"/>
    <property type="match status" value="2"/>
</dbReference>
<dbReference type="SMART" id="SM00382">
    <property type="entry name" value="AAA"/>
    <property type="match status" value="2"/>
</dbReference>
<dbReference type="SUPFAM" id="SSF90123">
    <property type="entry name" value="ABC transporter transmembrane region"/>
    <property type="match status" value="2"/>
</dbReference>
<dbReference type="SUPFAM" id="SSF52540">
    <property type="entry name" value="P-loop containing nucleoside triphosphate hydrolases"/>
    <property type="match status" value="2"/>
</dbReference>
<dbReference type="PROSITE" id="PS50929">
    <property type="entry name" value="ABC_TM1F"/>
    <property type="match status" value="2"/>
</dbReference>
<dbReference type="PROSITE" id="PS00211">
    <property type="entry name" value="ABC_TRANSPORTER_1"/>
    <property type="match status" value="2"/>
</dbReference>
<dbReference type="PROSITE" id="PS50893">
    <property type="entry name" value="ABC_TRANSPORTER_2"/>
    <property type="match status" value="2"/>
</dbReference>
<accession>Q9C7F8</accession>
<evidence type="ECO:0000255" key="1"/>
<evidence type="ECO:0000255" key="2">
    <source>
        <dbReference type="PROSITE-ProRule" id="PRU00434"/>
    </source>
</evidence>
<evidence type="ECO:0000255" key="3">
    <source>
        <dbReference type="PROSITE-ProRule" id="PRU00441"/>
    </source>
</evidence>
<evidence type="ECO:0000256" key="4">
    <source>
        <dbReference type="SAM" id="MobiDB-lite"/>
    </source>
</evidence>
<evidence type="ECO:0000305" key="5"/>
<feature type="chain" id="PRO_0000227926" description="ABC transporter B family member 13">
    <location>
        <begin position="1"/>
        <end position="1245"/>
    </location>
</feature>
<feature type="transmembrane region" description="Helical" evidence="3">
    <location>
        <begin position="48"/>
        <end position="68"/>
    </location>
</feature>
<feature type="transmembrane region" description="Helical" evidence="3">
    <location>
        <begin position="94"/>
        <end position="114"/>
    </location>
</feature>
<feature type="transmembrane region" description="Helical" evidence="3">
    <location>
        <begin position="171"/>
        <end position="191"/>
    </location>
</feature>
<feature type="transmembrane region" description="Helical" evidence="3">
    <location>
        <begin position="195"/>
        <end position="215"/>
    </location>
</feature>
<feature type="transmembrane region" description="Helical" evidence="3">
    <location>
        <begin position="276"/>
        <end position="296"/>
    </location>
</feature>
<feature type="transmembrane region" description="Helical" evidence="3">
    <location>
        <begin position="314"/>
        <end position="334"/>
    </location>
</feature>
<feature type="transmembrane region" description="Helical" evidence="3">
    <location>
        <begin position="686"/>
        <end position="706"/>
    </location>
</feature>
<feature type="transmembrane region" description="Helical" evidence="3">
    <location>
        <begin position="725"/>
        <end position="745"/>
    </location>
</feature>
<feature type="transmembrane region" description="Helical" evidence="3">
    <location>
        <begin position="805"/>
        <end position="822"/>
    </location>
</feature>
<feature type="transmembrane region" description="Helical" evidence="3">
    <location>
        <begin position="828"/>
        <end position="848"/>
    </location>
</feature>
<feature type="transmembrane region" description="Helical" evidence="3">
    <location>
        <begin position="913"/>
        <end position="933"/>
    </location>
</feature>
<feature type="transmembrane region" description="Helical" evidence="3">
    <location>
        <begin position="947"/>
        <end position="967"/>
    </location>
</feature>
<feature type="domain" description="ABC transmembrane type-1 1" evidence="3">
    <location>
        <begin position="47"/>
        <end position="336"/>
    </location>
</feature>
<feature type="domain" description="ABC transporter 1" evidence="2">
    <location>
        <begin position="372"/>
        <end position="607"/>
    </location>
</feature>
<feature type="domain" description="ABC transmembrane type-1 2" evidence="3">
    <location>
        <begin position="681"/>
        <end position="969"/>
    </location>
</feature>
<feature type="domain" description="ABC transporter 2" evidence="2">
    <location>
        <begin position="1004"/>
        <end position="1240"/>
    </location>
</feature>
<feature type="region of interest" description="Disordered" evidence="4">
    <location>
        <begin position="1"/>
        <end position="20"/>
    </location>
</feature>
<feature type="region of interest" description="Disordered" evidence="4">
    <location>
        <begin position="610"/>
        <end position="660"/>
    </location>
</feature>
<feature type="compositionally biased region" description="Polar residues" evidence="4">
    <location>
        <begin position="1"/>
        <end position="14"/>
    </location>
</feature>
<feature type="compositionally biased region" description="Polar residues" evidence="4">
    <location>
        <begin position="610"/>
        <end position="629"/>
    </location>
</feature>
<feature type="compositionally biased region" description="Low complexity" evidence="4">
    <location>
        <begin position="630"/>
        <end position="646"/>
    </location>
</feature>
<feature type="compositionally biased region" description="Basic and acidic residues" evidence="4">
    <location>
        <begin position="647"/>
        <end position="660"/>
    </location>
</feature>
<feature type="binding site" evidence="2">
    <location>
        <begin position="406"/>
        <end position="413"/>
    </location>
    <ligand>
        <name>ATP</name>
        <dbReference type="ChEBI" id="CHEBI:30616"/>
        <label>1</label>
    </ligand>
</feature>
<feature type="binding site" evidence="2">
    <location>
        <begin position="1039"/>
        <end position="1046"/>
    </location>
    <ligand>
        <name>ATP</name>
        <dbReference type="ChEBI" id="CHEBI:30616"/>
        <label>2</label>
    </ligand>
</feature>
<feature type="glycosylation site" description="N-linked (GlcNAc...) asparagine" evidence="1">
    <location>
        <position position="77"/>
    </location>
</feature>
<feature type="glycosylation site" description="N-linked (GlcNAc...) asparagine" evidence="1">
    <location>
        <position position="351"/>
    </location>
</feature>
<feature type="glycosylation site" description="N-linked (GlcNAc...) asparagine" evidence="1">
    <location>
        <position position="391"/>
    </location>
</feature>
<feature type="glycosylation site" description="N-linked (GlcNAc...) asparagine" evidence="1">
    <location>
        <position position="778"/>
    </location>
</feature>
<feature type="glycosylation site" description="N-linked (GlcNAc...) asparagine" evidence="1">
    <location>
        <position position="1008"/>
    </location>
</feature>
<feature type="glycosylation site" description="N-linked (GlcNAc...) asparagine" evidence="1">
    <location>
        <position position="1106"/>
    </location>
</feature>
<reference key="1">
    <citation type="journal article" date="2000" name="Nature">
        <title>Sequence and analysis of chromosome 1 of the plant Arabidopsis thaliana.</title>
        <authorList>
            <person name="Theologis A."/>
            <person name="Ecker J.R."/>
            <person name="Palm C.J."/>
            <person name="Federspiel N.A."/>
            <person name="Kaul S."/>
            <person name="White O."/>
            <person name="Alonso J."/>
            <person name="Altafi H."/>
            <person name="Araujo R."/>
            <person name="Bowman C.L."/>
            <person name="Brooks S.Y."/>
            <person name="Buehler E."/>
            <person name="Chan A."/>
            <person name="Chao Q."/>
            <person name="Chen H."/>
            <person name="Cheuk R.F."/>
            <person name="Chin C.W."/>
            <person name="Chung M.K."/>
            <person name="Conn L."/>
            <person name="Conway A.B."/>
            <person name="Conway A.R."/>
            <person name="Creasy T.H."/>
            <person name="Dewar K."/>
            <person name="Dunn P."/>
            <person name="Etgu P."/>
            <person name="Feldblyum T.V."/>
            <person name="Feng J.-D."/>
            <person name="Fong B."/>
            <person name="Fujii C.Y."/>
            <person name="Gill J.E."/>
            <person name="Goldsmith A.D."/>
            <person name="Haas B."/>
            <person name="Hansen N.F."/>
            <person name="Hughes B."/>
            <person name="Huizar L."/>
            <person name="Hunter J.L."/>
            <person name="Jenkins J."/>
            <person name="Johnson-Hopson C."/>
            <person name="Khan S."/>
            <person name="Khaykin E."/>
            <person name="Kim C.J."/>
            <person name="Koo H.L."/>
            <person name="Kremenetskaia I."/>
            <person name="Kurtz D.B."/>
            <person name="Kwan A."/>
            <person name="Lam B."/>
            <person name="Langin-Hooper S."/>
            <person name="Lee A."/>
            <person name="Lee J.M."/>
            <person name="Lenz C.A."/>
            <person name="Li J.H."/>
            <person name="Li Y.-P."/>
            <person name="Lin X."/>
            <person name="Liu S.X."/>
            <person name="Liu Z.A."/>
            <person name="Luros J.S."/>
            <person name="Maiti R."/>
            <person name="Marziali A."/>
            <person name="Militscher J."/>
            <person name="Miranda M."/>
            <person name="Nguyen M."/>
            <person name="Nierman W.C."/>
            <person name="Osborne B.I."/>
            <person name="Pai G."/>
            <person name="Peterson J."/>
            <person name="Pham P.K."/>
            <person name="Rizzo M."/>
            <person name="Rooney T."/>
            <person name="Rowley D."/>
            <person name="Sakano H."/>
            <person name="Salzberg S.L."/>
            <person name="Schwartz J.R."/>
            <person name="Shinn P."/>
            <person name="Southwick A.M."/>
            <person name="Sun H."/>
            <person name="Tallon L.J."/>
            <person name="Tambunga G."/>
            <person name="Toriumi M.J."/>
            <person name="Town C.D."/>
            <person name="Utterback T."/>
            <person name="Van Aken S."/>
            <person name="Vaysberg M."/>
            <person name="Vysotskaia V.S."/>
            <person name="Walker M."/>
            <person name="Wu D."/>
            <person name="Yu G."/>
            <person name="Fraser C.M."/>
            <person name="Venter J.C."/>
            <person name="Davis R.W."/>
        </authorList>
    </citation>
    <scope>NUCLEOTIDE SEQUENCE [LARGE SCALE GENOMIC DNA]</scope>
    <source>
        <strain>cv. Columbia</strain>
    </source>
</reference>
<reference key="2">
    <citation type="journal article" date="2017" name="Plant J.">
        <title>Araport11: a complete reannotation of the Arabidopsis thaliana reference genome.</title>
        <authorList>
            <person name="Cheng C.Y."/>
            <person name="Krishnakumar V."/>
            <person name="Chan A.P."/>
            <person name="Thibaud-Nissen F."/>
            <person name="Schobel S."/>
            <person name="Town C.D."/>
        </authorList>
    </citation>
    <scope>GENOME REANNOTATION</scope>
    <source>
        <strain>cv. Columbia</strain>
    </source>
</reference>
<reference key="3">
    <citation type="journal article" date="2001" name="J. Biol. Chem.">
        <title>The Arabidopsis thaliana ABC protein superfamily, a complete inventory.</title>
        <authorList>
            <person name="Sanchez-Fernandez R."/>
            <person name="Davies T.G."/>
            <person name="Coleman J.O."/>
            <person name="Rea P.A."/>
        </authorList>
    </citation>
    <scope>GENE FAMILY</scope>
    <scope>NOMENCLATURE</scope>
</reference>
<reference key="4">
    <citation type="journal article" date="2008" name="Trends Plant Sci.">
        <title>Plant ABC proteins - a unified nomenclature and updated inventory.</title>
        <authorList>
            <person name="Verrier P.J."/>
            <person name="Bird D."/>
            <person name="Burla B."/>
            <person name="Dassa E."/>
            <person name="Forestier C."/>
            <person name="Geisler M."/>
            <person name="Klein M."/>
            <person name="Kolukisaoglu H.U."/>
            <person name="Lee Y."/>
            <person name="Martinoia E."/>
            <person name="Murphy A."/>
            <person name="Rea P.A."/>
            <person name="Samuels L."/>
            <person name="Schulz B."/>
            <person name="Spalding E.J."/>
            <person name="Yazaki K."/>
            <person name="Theodoulou F.L."/>
        </authorList>
    </citation>
    <scope>GENE FAMILY</scope>
    <scope>NOMENCLATURE</scope>
</reference>
<organism>
    <name type="scientific">Arabidopsis thaliana</name>
    <name type="common">Mouse-ear cress</name>
    <dbReference type="NCBI Taxonomy" id="3702"/>
    <lineage>
        <taxon>Eukaryota</taxon>
        <taxon>Viridiplantae</taxon>
        <taxon>Streptophyta</taxon>
        <taxon>Embryophyta</taxon>
        <taxon>Tracheophyta</taxon>
        <taxon>Spermatophyta</taxon>
        <taxon>Magnoliopsida</taxon>
        <taxon>eudicotyledons</taxon>
        <taxon>Gunneridae</taxon>
        <taxon>Pentapetalae</taxon>
        <taxon>rosids</taxon>
        <taxon>malvids</taxon>
        <taxon>Brassicales</taxon>
        <taxon>Brassicaceae</taxon>
        <taxon>Camelineae</taxon>
        <taxon>Arabidopsis</taxon>
    </lineage>
</organism>
<gene>
    <name type="primary">ABCB13</name>
    <name type="synonym">MDR15</name>
    <name type="synonym">PGP13</name>
    <name type="ordered locus">At1g27940</name>
    <name type="ORF">F13K9.5</name>
</gene>
<name>AB13B_ARATH</name>
<keyword id="KW-0067">ATP-binding</keyword>
<keyword id="KW-0325">Glycoprotein</keyword>
<keyword id="KW-0472">Membrane</keyword>
<keyword id="KW-0547">Nucleotide-binding</keyword>
<keyword id="KW-1185">Reference proteome</keyword>
<keyword id="KW-0677">Repeat</keyword>
<keyword id="KW-0812">Transmembrane</keyword>
<keyword id="KW-1133">Transmembrane helix</keyword>
<keyword id="KW-0813">Transport</keyword>
<sequence length="1245" mass="135776">MDNTERSSNGNIQAETEAKEEKKNIKKESVSLMGLFSAADKLDYFLMLLGGLGACIHGATLPLFFVFFGKMLDSLGNLSTDPKAISSRVSQNALYLVYLGLVNFVSAWIGVSCWMQTGERQTARLRINYLKSILAKDITFFDTEARDSNLIFHISSDAILVQDAIGDKTDHVLRYLSQFIAGFVIGFLSVWQLTLLTLGVVPLIAIAGGGYAIVMSTISEKSETAYADAGKVAEEVMSQVRTVYAFVGEEKAVKSYSNSLKKALKLGKRSGLAKGLGVGLTYSLLFCAWALLLWYASLLVRHGKTNGAKAFTTILNVIFSGFALGQAAPSLSAIAKGRVAAANIFRMIGNNNSESSQRLDEGTTLQNVAGRIEFQKVSFAYPSRPNMVFENLSFTIRSGKTFAFVGPSGSGKSTIISMVQRFYEPNSGEILLDGNDIKSLKLKWFREQLGLVSQEPALFATTIASNILLGKENANMDQIIEAAKAANADSFIKSLPNGYNTQVGEGGTQLSGGQKQRIAIARAVLRNPKILLLDEATSALDAESEKIVQQALDNVMEKRTTIVVAHRLSTIRNVDKIVVLRDGQVRETGSHSELMLRGGDYATLVNCQETEPQENSRSIMSETCKSQAGSSSSRRVSSSRRTSSFRVDQEKTKNDDSKKDFSSSSMIWELIKLNSPEWPYALLGSIGAVLAGAQTPLFSMGIAYVLTAFYSPFPNVIKRDVEKVAIIFAGAGIVTAPIYLLQHYFYTLMGERLTSRVRLSLFSAILSNEIGWFDLDENNTGSLTSILAADATLVRSALADRLSTIVQNLSLTVTALALAFFYSWRVAAVVTACFPLLIAASLTEQLFLKGFGGDYTRAYSRATSVAREAIANIRTVAAYGAEKQISEQFTCELSKPTKNAFVRGHISGFGYGLSQFLAFCSYALGLWYVSVLINHKETNFGDSIKSFMVLIVTAFSVSETLALTPDIVKGTQALGSVFRVLHRETKISPDQPNSRMVSQVKGDIEFRNVSFVYPTRPEIDIFKNLNLRVSAGKSLAVVGPSGSGKSTVIGLIMRFYDPSNGNLCIDGQDIKTLNLRSLRKKLALVQQEPALFSTTIYENIKYGNENASEAEIMEAAKAANAHEFIIKMEEGYKTHAGDKGVQLSGGQKQRVAIARAVLKDPSVLLLDEATSALDTSSEKLVQEALDKLMKGRTTVLVAHRLSTIRKADTVAVLHKGRVVEKGSHRELVSIPNGFYKQLTSLQEVL</sequence>
<proteinExistence type="inferred from homology"/>